<reference key="1">
    <citation type="journal article" date="1999" name="Nature">
        <title>Genomic sequence comparison of two unrelated isolates of the human gastric pathogen Helicobacter pylori.</title>
        <authorList>
            <person name="Alm R.A."/>
            <person name="Ling L.-S.L."/>
            <person name="Moir D.T."/>
            <person name="King B.L."/>
            <person name="Brown E.D."/>
            <person name="Doig P.C."/>
            <person name="Smith D.R."/>
            <person name="Noonan B."/>
            <person name="Guild B.C."/>
            <person name="deJonge B.L."/>
            <person name="Carmel G."/>
            <person name="Tummino P.J."/>
            <person name="Caruso A."/>
            <person name="Uria-Nickelsen M."/>
            <person name="Mills D.M."/>
            <person name="Ives C."/>
            <person name="Gibson R."/>
            <person name="Merberg D."/>
            <person name="Mills S.D."/>
            <person name="Jiang Q."/>
            <person name="Taylor D.E."/>
            <person name="Vovis G.F."/>
            <person name="Trust T.J."/>
        </authorList>
    </citation>
    <scope>NUCLEOTIDE SEQUENCE [LARGE SCALE GENOMIC DNA]</scope>
    <source>
        <strain>J99 / ATCC 700824</strain>
    </source>
</reference>
<comment type="function">
    <text evidence="2">Specifically catalyzes the decarboxylation of meso-diaminopimelate (meso-DAP) to L-lysine.</text>
</comment>
<comment type="catalytic activity">
    <reaction evidence="2">
        <text>meso-2,6-diaminopimelate + H(+) = L-lysine + CO2</text>
        <dbReference type="Rhea" id="RHEA:15101"/>
        <dbReference type="ChEBI" id="CHEBI:15378"/>
        <dbReference type="ChEBI" id="CHEBI:16526"/>
        <dbReference type="ChEBI" id="CHEBI:32551"/>
        <dbReference type="ChEBI" id="CHEBI:57791"/>
        <dbReference type="EC" id="4.1.1.20"/>
    </reaction>
</comment>
<comment type="cofactor">
    <cofactor evidence="2">
        <name>pyridoxal 5'-phosphate</name>
        <dbReference type="ChEBI" id="CHEBI:597326"/>
    </cofactor>
</comment>
<comment type="pathway">
    <text evidence="2">Amino-acid biosynthesis; L-lysine biosynthesis via DAP pathway; L-lysine from DL-2,6-diaminopimelate: step 1/1.</text>
</comment>
<comment type="subunit">
    <text evidence="2">Homodimer.</text>
</comment>
<comment type="similarity">
    <text evidence="2">Belongs to the Orn/Lys/Arg decarboxylase class-II family. LysA subfamily.</text>
</comment>
<proteinExistence type="inferred from homology"/>
<dbReference type="EC" id="4.1.1.20" evidence="2"/>
<dbReference type="EMBL" id="AE001439">
    <property type="protein sequence ID" value="AAD05866.1"/>
    <property type="molecule type" value="Genomic_DNA"/>
</dbReference>
<dbReference type="PIR" id="F71950">
    <property type="entry name" value="F71950"/>
</dbReference>
<dbReference type="RefSeq" id="WP_000483657.1">
    <property type="nucleotide sequence ID" value="NC_000921.1"/>
</dbReference>
<dbReference type="SMR" id="Q9ZME5"/>
<dbReference type="KEGG" id="hpj:jhp_0275"/>
<dbReference type="PATRIC" id="fig|85963.30.peg.739"/>
<dbReference type="eggNOG" id="COG0019">
    <property type="taxonomic scope" value="Bacteria"/>
</dbReference>
<dbReference type="UniPathway" id="UPA00034">
    <property type="reaction ID" value="UER00027"/>
</dbReference>
<dbReference type="Proteomes" id="UP000000804">
    <property type="component" value="Chromosome"/>
</dbReference>
<dbReference type="GO" id="GO:0008836">
    <property type="term" value="F:diaminopimelate decarboxylase activity"/>
    <property type="evidence" value="ECO:0007669"/>
    <property type="project" value="UniProtKB-UniRule"/>
</dbReference>
<dbReference type="GO" id="GO:0030170">
    <property type="term" value="F:pyridoxal phosphate binding"/>
    <property type="evidence" value="ECO:0007669"/>
    <property type="project" value="UniProtKB-UniRule"/>
</dbReference>
<dbReference type="GO" id="GO:0009089">
    <property type="term" value="P:lysine biosynthetic process via diaminopimelate"/>
    <property type="evidence" value="ECO:0007669"/>
    <property type="project" value="UniProtKB-UniRule"/>
</dbReference>
<dbReference type="CDD" id="cd06828">
    <property type="entry name" value="PLPDE_III_DapDC"/>
    <property type="match status" value="1"/>
</dbReference>
<dbReference type="FunFam" id="2.40.37.10:FF:000019">
    <property type="entry name" value="Diaminopimelate decarboxylase"/>
    <property type="match status" value="1"/>
</dbReference>
<dbReference type="FunFam" id="3.20.20.10:FF:000003">
    <property type="entry name" value="Diaminopimelate decarboxylase"/>
    <property type="match status" value="1"/>
</dbReference>
<dbReference type="Gene3D" id="3.20.20.10">
    <property type="entry name" value="Alanine racemase"/>
    <property type="match status" value="1"/>
</dbReference>
<dbReference type="Gene3D" id="2.40.37.10">
    <property type="entry name" value="Lyase, Ornithine Decarboxylase, Chain A, domain 1"/>
    <property type="match status" value="1"/>
</dbReference>
<dbReference type="HAMAP" id="MF_02120">
    <property type="entry name" value="LysA"/>
    <property type="match status" value="1"/>
</dbReference>
<dbReference type="InterPro" id="IPR009006">
    <property type="entry name" value="Ala_racemase/Decarboxylase_C"/>
</dbReference>
<dbReference type="InterPro" id="IPR002986">
    <property type="entry name" value="DAP_deCOOHase_LysA"/>
</dbReference>
<dbReference type="InterPro" id="IPR022643">
    <property type="entry name" value="De-COase2_C"/>
</dbReference>
<dbReference type="InterPro" id="IPR022644">
    <property type="entry name" value="De-COase2_N"/>
</dbReference>
<dbReference type="InterPro" id="IPR022653">
    <property type="entry name" value="De-COase2_pyr-phos_BS"/>
</dbReference>
<dbReference type="InterPro" id="IPR000183">
    <property type="entry name" value="Orn/DAP/Arg_de-COase"/>
</dbReference>
<dbReference type="InterPro" id="IPR029066">
    <property type="entry name" value="PLP-binding_barrel"/>
</dbReference>
<dbReference type="NCBIfam" id="TIGR01048">
    <property type="entry name" value="lysA"/>
    <property type="match status" value="1"/>
</dbReference>
<dbReference type="PANTHER" id="PTHR43727">
    <property type="entry name" value="DIAMINOPIMELATE DECARBOXYLASE"/>
    <property type="match status" value="1"/>
</dbReference>
<dbReference type="PANTHER" id="PTHR43727:SF2">
    <property type="entry name" value="GROUP IV DECARBOXYLASE"/>
    <property type="match status" value="1"/>
</dbReference>
<dbReference type="Pfam" id="PF02784">
    <property type="entry name" value="Orn_Arg_deC_N"/>
    <property type="match status" value="1"/>
</dbReference>
<dbReference type="Pfam" id="PF00278">
    <property type="entry name" value="Orn_DAP_Arg_deC"/>
    <property type="match status" value="1"/>
</dbReference>
<dbReference type="PRINTS" id="PR01181">
    <property type="entry name" value="DAPDCRBXLASE"/>
</dbReference>
<dbReference type="PRINTS" id="PR01179">
    <property type="entry name" value="ODADCRBXLASE"/>
</dbReference>
<dbReference type="SUPFAM" id="SSF50621">
    <property type="entry name" value="Alanine racemase C-terminal domain-like"/>
    <property type="match status" value="1"/>
</dbReference>
<dbReference type="SUPFAM" id="SSF51419">
    <property type="entry name" value="PLP-binding barrel"/>
    <property type="match status" value="1"/>
</dbReference>
<dbReference type="PROSITE" id="PS00878">
    <property type="entry name" value="ODR_DC_2_1"/>
    <property type="match status" value="1"/>
</dbReference>
<dbReference type="PROSITE" id="PS00879">
    <property type="entry name" value="ODR_DC_2_2"/>
    <property type="match status" value="1"/>
</dbReference>
<accession>Q9ZME5</accession>
<gene>
    <name evidence="2" type="primary">lysA</name>
    <name type="ordered locus">jhp_0275</name>
</gene>
<evidence type="ECO:0000255" key="1"/>
<evidence type="ECO:0000255" key="2">
    <source>
        <dbReference type="HAMAP-Rule" id="MF_02120"/>
    </source>
</evidence>
<sequence length="405" mass="45114">MFNYEELFQTYKTPFYLYDFDKIKQAFLNYKEAFKGRKSLICYALKANSNLSILSLLANLGSGADCVSIGEIQRALKAGIKPYKIVFSGVGKSAFEIEQALKLNILFLNVESFMELKTIETIAQSLGIKARISIRINPNIDAKTHPYISTGLKENKFGVEEKEALEMFLWAKKSAFLEPVSVHFHIGSQLLDLDPITEASQKVAKIAKSLIALGIDLRFFDVGGGIGVSYENEETIKLYDYAQGILNSLQGLDLTIICEPGRSIVAESGELITQVLYEKKAQNKRFVIVDAGMNDFLRPSLYHAKHAIRVITPCGGREISPCDVVGPVCESSDTFLKDANLPELEPGDKLAIEKVGAYGSSMASQYNSRPKLLELALEDHKIRVIRKREALEDLWRLEIEGLEGV</sequence>
<keyword id="KW-0028">Amino-acid biosynthesis</keyword>
<keyword id="KW-0210">Decarboxylase</keyword>
<keyword id="KW-0456">Lyase</keyword>
<keyword id="KW-0457">Lysine biosynthesis</keyword>
<keyword id="KW-0663">Pyridoxal phosphate</keyword>
<feature type="chain" id="PRO_0000149926" description="Diaminopimelate decarboxylase">
    <location>
        <begin position="1"/>
        <end position="405"/>
    </location>
</feature>
<feature type="active site" description="Proton donor" evidence="1">
    <location>
        <position position="329"/>
    </location>
</feature>
<feature type="binding site" evidence="2">
    <location>
        <position position="225"/>
    </location>
    <ligand>
        <name>pyridoxal 5'-phosphate</name>
        <dbReference type="ChEBI" id="CHEBI:597326"/>
    </ligand>
</feature>
<feature type="binding site" evidence="2">
    <location>
        <begin position="259"/>
        <end position="262"/>
    </location>
    <ligand>
        <name>pyridoxal 5'-phosphate</name>
        <dbReference type="ChEBI" id="CHEBI:597326"/>
    </ligand>
</feature>
<feature type="binding site" evidence="2">
    <location>
        <position position="262"/>
    </location>
    <ligand>
        <name>substrate</name>
    </ligand>
</feature>
<feature type="binding site" evidence="2">
    <location>
        <position position="298"/>
    </location>
    <ligand>
        <name>substrate</name>
    </ligand>
</feature>
<feature type="binding site" evidence="2">
    <location>
        <position position="302"/>
    </location>
    <ligand>
        <name>substrate</name>
    </ligand>
</feature>
<feature type="binding site" evidence="2">
    <location>
        <position position="330"/>
    </location>
    <ligand>
        <name>substrate</name>
    </ligand>
</feature>
<feature type="binding site" evidence="2">
    <location>
        <position position="358"/>
    </location>
    <ligand>
        <name>pyridoxal 5'-phosphate</name>
        <dbReference type="ChEBI" id="CHEBI:597326"/>
    </ligand>
</feature>
<feature type="binding site" evidence="2">
    <location>
        <position position="358"/>
    </location>
    <ligand>
        <name>substrate</name>
    </ligand>
</feature>
<feature type="modified residue" description="N6-(pyridoxal phosphate)lysine" evidence="2">
    <location>
        <position position="46"/>
    </location>
</feature>
<name>DCDA_HELPJ</name>
<organism>
    <name type="scientific">Helicobacter pylori (strain J99 / ATCC 700824)</name>
    <name type="common">Campylobacter pylori J99</name>
    <dbReference type="NCBI Taxonomy" id="85963"/>
    <lineage>
        <taxon>Bacteria</taxon>
        <taxon>Pseudomonadati</taxon>
        <taxon>Campylobacterota</taxon>
        <taxon>Epsilonproteobacteria</taxon>
        <taxon>Campylobacterales</taxon>
        <taxon>Helicobacteraceae</taxon>
        <taxon>Helicobacter</taxon>
    </lineage>
</organism>
<protein>
    <recommendedName>
        <fullName evidence="2">Diaminopimelate decarboxylase</fullName>
        <shortName evidence="2">DAP decarboxylase</shortName>
        <shortName evidence="2">DAPDC</shortName>
        <ecNumber evidence="2">4.1.1.20</ecNumber>
    </recommendedName>
</protein>